<organism>
    <name type="scientific">Bos taurus</name>
    <name type="common">Bovine</name>
    <dbReference type="NCBI Taxonomy" id="9913"/>
    <lineage>
        <taxon>Eukaryota</taxon>
        <taxon>Metazoa</taxon>
        <taxon>Chordata</taxon>
        <taxon>Craniata</taxon>
        <taxon>Vertebrata</taxon>
        <taxon>Euteleostomi</taxon>
        <taxon>Mammalia</taxon>
        <taxon>Eutheria</taxon>
        <taxon>Laurasiatheria</taxon>
        <taxon>Artiodactyla</taxon>
        <taxon>Ruminantia</taxon>
        <taxon>Pecora</taxon>
        <taxon>Bovidae</taxon>
        <taxon>Bovinae</taxon>
        <taxon>Bos</taxon>
    </lineage>
</organism>
<sequence>MEEPEEQPPHEADTEPVVTSGASEAVPRVLPGDPQNLSDVDAFNLLLEMKLKRRRERPNLPHTVTELVAEDGSRVYVVGTAHFSDDSKRDVVKTIREVQPDVVVVELCQYRVSMLKMDERTLLREAKEISLEKLQQAIRQNGVASGLMQMLLLKVSAHITEQLGVAPGGEFREAFKEASRVPFCKFHLGDRPIPVTFKRAIAALSLWQKVKLAWGLCFLSDPISKDDVERCKQKDLLEQMMAEMVGEFPDLHRTIVSERDVYLTYMLRQAARRLELPRASDAEPRKCVPSVVVGVVGMGHVPGIEKNWTTDLNIQEIMTVPPPSASGRVSRLAVKAAALGLLGYGLYWTGRRAVSLLLALPAARHCLQRLSDAWPQK</sequence>
<reference key="1">
    <citation type="journal article" date="2005" name="BMC Genomics">
        <title>Characterization of 954 bovine full-CDS cDNA sequences.</title>
        <authorList>
            <person name="Harhay G.P."/>
            <person name="Sonstegard T.S."/>
            <person name="Keele J.W."/>
            <person name="Heaton M.P."/>
            <person name="Clawson M.L."/>
            <person name="Snelling W.M."/>
            <person name="Wiedmann R.T."/>
            <person name="Van Tassell C.P."/>
            <person name="Smith T.P.L."/>
        </authorList>
    </citation>
    <scope>NUCLEOTIDE SEQUENCE [LARGE SCALE MRNA]</scope>
</reference>
<gene>
    <name type="primary">TRABD</name>
</gene>
<keyword id="KW-0007">Acetylation</keyword>
<keyword id="KW-0597">Phosphoprotein</keyword>
<keyword id="KW-1185">Reference proteome</keyword>
<dbReference type="EMBL" id="BT021644">
    <property type="protein sequence ID" value="AAX46491.1"/>
    <property type="molecule type" value="mRNA"/>
</dbReference>
<dbReference type="RefSeq" id="NP_001029624.1">
    <property type="nucleotide sequence ID" value="NM_001034452.1"/>
</dbReference>
<dbReference type="RefSeq" id="XP_005207573.1">
    <property type="nucleotide sequence ID" value="XM_005207516.5"/>
</dbReference>
<dbReference type="RefSeq" id="XP_010804127.1">
    <property type="nucleotide sequence ID" value="XM_010805825.4"/>
</dbReference>
<dbReference type="SMR" id="Q58DF3"/>
<dbReference type="FunCoup" id="Q58DF3">
    <property type="interactions" value="1721"/>
</dbReference>
<dbReference type="STRING" id="9913.ENSBTAP00000061649"/>
<dbReference type="PaxDb" id="9913-ENSBTAP00000002512"/>
<dbReference type="GeneID" id="513765"/>
<dbReference type="KEGG" id="bta:513765"/>
<dbReference type="CTD" id="80305"/>
<dbReference type="VEuPathDB" id="HostDB:ENSBTAG00000001931"/>
<dbReference type="eggNOG" id="KOG2860">
    <property type="taxonomic scope" value="Eukaryota"/>
</dbReference>
<dbReference type="InParanoid" id="Q58DF3"/>
<dbReference type="OMA" id="MEKMMTT"/>
<dbReference type="OrthoDB" id="48306at2759"/>
<dbReference type="Proteomes" id="UP000009136">
    <property type="component" value="Chromosome 5"/>
</dbReference>
<dbReference type="Bgee" id="ENSBTAG00000001931">
    <property type="expression patterns" value="Expressed in saliva-secreting gland and 106 other cell types or tissues"/>
</dbReference>
<dbReference type="CDD" id="cd14726">
    <property type="entry name" value="TraB_PrgY-like"/>
    <property type="match status" value="1"/>
</dbReference>
<dbReference type="InterPro" id="IPR002816">
    <property type="entry name" value="TraB/PrgY/GumN_fam"/>
</dbReference>
<dbReference type="InterPro" id="IPR046345">
    <property type="entry name" value="TraB_PrgY-like"/>
</dbReference>
<dbReference type="PANTHER" id="PTHR21530">
    <property type="entry name" value="PHEROMONE SHUTDOWN PROTEIN"/>
    <property type="match status" value="1"/>
</dbReference>
<dbReference type="PANTHER" id="PTHR21530:SF7">
    <property type="entry name" value="TRAB DOMAIN-CONTAINING PROTEIN"/>
    <property type="match status" value="1"/>
</dbReference>
<dbReference type="Pfam" id="PF01963">
    <property type="entry name" value="TraB_PrgY_gumN"/>
    <property type="match status" value="1"/>
</dbReference>
<protein>
    <recommendedName>
        <fullName>TraB domain-containing protein</fullName>
    </recommendedName>
</protein>
<accession>Q58DF3</accession>
<proteinExistence type="evidence at transcript level"/>
<evidence type="ECO:0000250" key="1">
    <source>
        <dbReference type="UniProtKB" id="Q9H4I3"/>
    </source>
</evidence>
<evidence type="ECO:0000256" key="2">
    <source>
        <dbReference type="SAM" id="MobiDB-lite"/>
    </source>
</evidence>
<feature type="chain" id="PRO_0000247958" description="TraB domain-containing protein">
    <location>
        <begin position="1"/>
        <end position="377"/>
    </location>
</feature>
<feature type="region of interest" description="Disordered" evidence="2">
    <location>
        <begin position="1"/>
        <end position="34"/>
    </location>
</feature>
<feature type="modified residue" description="N-acetylmethionine" evidence="1">
    <location>
        <position position="1"/>
    </location>
</feature>
<feature type="modified residue" description="Phosphothreonine" evidence="1">
    <location>
        <position position="65"/>
    </location>
</feature>
<name>TRABD_BOVIN</name>